<evidence type="ECO:0000255" key="1"/>
<evidence type="ECO:0000255" key="2">
    <source>
        <dbReference type="PROSITE-ProRule" id="PRU00114"/>
    </source>
</evidence>
<evidence type="ECO:0000269" key="3">
    <source>
    </source>
</evidence>
<evidence type="ECO:0000303" key="4">
    <source>
    </source>
</evidence>
<evidence type="ECO:0000303" key="5">
    <source>
    </source>
</evidence>
<evidence type="ECO:0000303" key="6">
    <source>
    </source>
</evidence>
<evidence type="ECO:0000303" key="7">
    <source>
    </source>
</evidence>
<evidence type="ECO:0000303" key="8">
    <source>
    </source>
</evidence>
<evidence type="ECO:0000303" key="9">
    <source ref="2"/>
</evidence>
<evidence type="ECO:0000305" key="10"/>
<evidence type="ECO:0007744" key="11">
    <source>
        <dbReference type="PDB" id="4WWK"/>
    </source>
</evidence>
<evidence type="ECO:0007744" key="12">
    <source>
        <dbReference type="PDB" id="5C07"/>
    </source>
</evidence>
<evidence type="ECO:0007744" key="13">
    <source>
        <dbReference type="PDB" id="5C08"/>
    </source>
</evidence>
<evidence type="ECO:0007744" key="14">
    <source>
        <dbReference type="PDB" id="5C09"/>
    </source>
</evidence>
<evidence type="ECO:0007744" key="15">
    <source>
        <dbReference type="PDB" id="5C0A"/>
    </source>
</evidence>
<evidence type="ECO:0007744" key="16">
    <source>
        <dbReference type="PDB" id="5C0B"/>
    </source>
</evidence>
<evidence type="ECO:0007744" key="17">
    <source>
        <dbReference type="PDB" id="5C0C"/>
    </source>
</evidence>
<evidence type="ECO:0007744" key="18">
    <source>
        <dbReference type="PDB" id="5HYJ"/>
    </source>
</evidence>
<evidence type="ECO:0007829" key="19">
    <source>
        <dbReference type="PDB" id="5C07"/>
    </source>
</evidence>
<evidence type="ECO:0007829" key="20">
    <source>
        <dbReference type="PDB" id="5C0C"/>
    </source>
</evidence>
<evidence type="ECO:0007829" key="21">
    <source>
        <dbReference type="PDB" id="5HYJ"/>
    </source>
</evidence>
<feature type="signal peptide" evidence="1">
    <location>
        <begin position="1"/>
        <end position="21"/>
    </location>
</feature>
<feature type="chain" id="PRO_0000443266" description="T cell receptor alpha variable 12-3" evidence="1">
    <location>
        <begin position="22"/>
        <end position="114"/>
    </location>
</feature>
<feature type="domain" description="Ig-like" evidence="2">
    <location>
        <begin position="24"/>
        <end position="114" status="greater than"/>
    </location>
</feature>
<feature type="glycosylation site" description="N-linked (GlcNAc...) asparagine" evidence="1">
    <location>
        <position position="44"/>
    </location>
</feature>
<feature type="disulfide bond" evidence="3 11 12 13 14 15 16 17 18">
    <location>
        <begin position="45"/>
        <end position="111"/>
    </location>
</feature>
<feature type="non-terminal residue">
    <location>
        <position position="114"/>
    </location>
</feature>
<feature type="strand" evidence="19">
    <location>
        <begin position="26"/>
        <end position="28"/>
    </location>
</feature>
<feature type="strand" evidence="20">
    <location>
        <begin position="33"/>
        <end position="36"/>
    </location>
</feature>
<feature type="strand" evidence="20">
    <location>
        <begin position="41"/>
        <end position="47"/>
    </location>
</feature>
<feature type="strand" evidence="20">
    <location>
        <begin position="54"/>
        <end position="60"/>
    </location>
</feature>
<feature type="strand" evidence="21">
    <location>
        <begin position="62"/>
        <end position="64"/>
    </location>
</feature>
<feature type="strand" evidence="20">
    <location>
        <begin position="66"/>
        <end position="80"/>
    </location>
</feature>
<feature type="strand" evidence="20">
    <location>
        <begin position="83"/>
        <end position="88"/>
    </location>
</feature>
<feature type="turn" evidence="20">
    <location>
        <begin position="89"/>
        <end position="92"/>
    </location>
</feature>
<feature type="strand" evidence="20">
    <location>
        <begin position="93"/>
        <end position="100"/>
    </location>
</feature>
<feature type="helix" evidence="20">
    <location>
        <begin position="103"/>
        <end position="105"/>
    </location>
</feature>
<feature type="strand" evidence="20">
    <location>
        <begin position="107"/>
        <end position="113"/>
    </location>
</feature>
<reference key="1">
    <citation type="journal article" date="2003" name="Nature">
        <title>The DNA sequence and analysis of human chromosome 14.</title>
        <authorList>
            <person name="Heilig R."/>
            <person name="Eckenberg R."/>
            <person name="Petit J.-L."/>
            <person name="Fonknechten N."/>
            <person name="Da Silva C."/>
            <person name="Cattolico L."/>
            <person name="Levy M."/>
            <person name="Barbe V."/>
            <person name="De Berardinis V."/>
            <person name="Ureta-Vidal A."/>
            <person name="Pelletier E."/>
            <person name="Vico V."/>
            <person name="Anthouard V."/>
            <person name="Rowen L."/>
            <person name="Madan A."/>
            <person name="Qin S."/>
            <person name="Sun H."/>
            <person name="Du H."/>
            <person name="Pepin K."/>
            <person name="Artiguenave F."/>
            <person name="Robert C."/>
            <person name="Cruaud C."/>
            <person name="Bruels T."/>
            <person name="Jaillon O."/>
            <person name="Friedlander L."/>
            <person name="Samson G."/>
            <person name="Brottier P."/>
            <person name="Cure S."/>
            <person name="Segurens B."/>
            <person name="Aniere F."/>
            <person name="Samain S."/>
            <person name="Crespeau H."/>
            <person name="Abbasi N."/>
            <person name="Aiach N."/>
            <person name="Boscus D."/>
            <person name="Dickhoff R."/>
            <person name="Dors M."/>
            <person name="Dubois I."/>
            <person name="Friedman C."/>
            <person name="Gouyvenoux M."/>
            <person name="James R."/>
            <person name="Madan A."/>
            <person name="Mairey-Estrada B."/>
            <person name="Mangenot S."/>
            <person name="Martins N."/>
            <person name="Menard M."/>
            <person name="Oztas S."/>
            <person name="Ratcliffe A."/>
            <person name="Shaffer T."/>
            <person name="Trask B."/>
            <person name="Vacherie B."/>
            <person name="Bellemere C."/>
            <person name="Belser C."/>
            <person name="Besnard-Gonnet M."/>
            <person name="Bartol-Mavel D."/>
            <person name="Boutard M."/>
            <person name="Briez-Silla S."/>
            <person name="Combette S."/>
            <person name="Dufosse-Laurent V."/>
            <person name="Ferron C."/>
            <person name="Lechaplais C."/>
            <person name="Louesse C."/>
            <person name="Muselet D."/>
            <person name="Magdelenat G."/>
            <person name="Pateau E."/>
            <person name="Petit E."/>
            <person name="Sirvain-Trukniewicz P."/>
            <person name="Trybou A."/>
            <person name="Vega-Czarny N."/>
            <person name="Bataille E."/>
            <person name="Bluet E."/>
            <person name="Bordelais I."/>
            <person name="Dubois M."/>
            <person name="Dumont C."/>
            <person name="Guerin T."/>
            <person name="Haffray S."/>
            <person name="Hammadi R."/>
            <person name="Muanga J."/>
            <person name="Pellouin V."/>
            <person name="Robert D."/>
            <person name="Wunderle E."/>
            <person name="Gauguet G."/>
            <person name="Roy A."/>
            <person name="Sainte-Marthe L."/>
            <person name="Verdier J."/>
            <person name="Verdier-Discala C."/>
            <person name="Hillier L.W."/>
            <person name="Fulton L."/>
            <person name="McPherson J."/>
            <person name="Matsuda F."/>
            <person name="Wilson R."/>
            <person name="Scarpelli C."/>
            <person name="Gyapay G."/>
            <person name="Wincker P."/>
            <person name="Saurin W."/>
            <person name="Quetier F."/>
            <person name="Waterston R."/>
            <person name="Hood L."/>
            <person name="Weissenbach J."/>
        </authorList>
    </citation>
    <scope>NUCLEOTIDE SEQUENCE [LARGE SCALE GENOMIC DNA] (IMGT ALLELE TRAV12-3*01)</scope>
</reference>
<reference key="2">
    <citation type="book" date="2001" name="The T Cell Receptor FactsBook.">
        <title>The T Cell Receptor FactsBook.</title>
        <editorList>
            <person name="Lefranc M.P."/>
            <person name="Lefranc G."/>
        </editorList>
        <authorList>
            <person name="Lefranc M.P."/>
            <person name="Lefranc G."/>
        </authorList>
    </citation>
    <scope>NOMENCLATURE</scope>
</reference>
<reference key="3">
    <citation type="journal article" date="2004" name="Nat. Rev. Immunol.">
        <title>The many important facets of T-cell repertoire diversity.</title>
        <authorList>
            <person name="Nikolich-Zugich J."/>
            <person name="Slifka M.K."/>
            <person name="Messaoudi I."/>
        </authorList>
    </citation>
    <scope>REVIEW ON T CELL REPERTOIRE DIVERSITY</scope>
</reference>
<reference key="4">
    <citation type="journal article" date="2010" name="Cold Spring Harb. Perspect. Biol.">
        <title>Structural biology of the T-cell receptor: insights into receptor assembly, ligand recognition, and initiation of signaling.</title>
        <authorList>
            <person name="Wucherpfennig K.W."/>
            <person name="Gagnon E."/>
            <person name="Call M.J."/>
            <person name="Huseby E.S."/>
            <person name="Call M.E."/>
        </authorList>
    </citation>
    <scope>REVIEW ON T CELL RECEPTOR-CD3 COMPLEX ASSEMBLY</scope>
    <scope>SUBCELLULAR LOCATION</scope>
</reference>
<reference key="5">
    <citation type="journal article" date="2013" name="Nat. Rev. Immunol.">
        <title>T cell receptor signalling networks: branched, diversified and bounded.</title>
        <authorList>
            <person name="Brownlie R.J."/>
            <person name="Zamoyska R."/>
        </authorList>
    </citation>
    <scope>REVIEW ON T CELL RECEPTOR SIGNALING</scope>
</reference>
<reference key="6">
    <citation type="journal article" date="2014" name="Front. Immunol.">
        <title>Immunoglobulin and T Cell Receptor Genes: IMGT((R)) and the Birth and Rise of Immunoinformatics.</title>
        <authorList>
            <person name="Lefranc M.P."/>
        </authorList>
    </citation>
    <scope>NOMENCLATURE</scope>
</reference>
<reference key="7">
    <citation type="journal article" date="2015" name="Annu. Rev. Immunol.">
        <title>T cell antigen receptor recognition of antigen-presenting molecules.</title>
        <authorList>
            <person name="Rossjohn J."/>
            <person name="Gras S."/>
            <person name="Miles J.J."/>
            <person name="Turner S.J."/>
            <person name="Godfrey D.I."/>
            <person name="McCluskey J."/>
        </authorList>
    </citation>
    <scope>REVIEW ON FUNCTION</scope>
</reference>
<reference evidence="11" key="8">
    <citation type="submission" date="2014-11" db="PDB data bank">
        <title>Crystal structure of human TCR Alpha Chain-TRAV12-3, Beta Chain-TRBV6-5, Antigen-presenting molecule CD1d, and Beta-2-microglobulin.</title>
        <authorList>
            <person name="Le Nours J."/>
            <person name="Praveena T."/>
            <person name="Pellicci D.G."/>
            <person name="Gherardin N.A."/>
            <person name="Lim R.T."/>
            <person name="Besra G."/>
            <person name="Keshipeddy S."/>
            <person name="Richardson S.K."/>
            <person name="Howell A.R."/>
            <person name="Gras S."/>
            <person name="Godfrey D.I."/>
            <person name="Rossjohn J."/>
            <person name="Uldrich A.P."/>
        </authorList>
    </citation>
    <scope>X-RAY CRYSTALLOGRAPHY (3.10 ANGSTROMS) OF 22-114</scope>
    <scope>DISULFIDE BONDS</scope>
</reference>
<reference evidence="18" key="9">
    <citation type="journal article" date="2016" name="J. Clin. Invest.">
        <title>A 'hotspot' for autoimmune T cells in type 1 diabetes.</title>
        <authorList>
            <person name="Stadinski B.D."/>
            <person name="Obst R."/>
            <person name="Huseby E.S."/>
        </authorList>
    </citation>
    <scope>X-RAY CRYSTALLOGRAPHY (3.06 ANGSTROMS) OF 24-113</scope>
    <scope>DISULFIDE BONDS</scope>
</reference>
<reference evidence="12 13 14 15 16 17" key="10">
    <citation type="journal article" date="2016" name="J. Clin. Invest.">
        <title>Hotspot autoimmune T cell receptor binding underlies pathogen and insulin peptide cross-reactivity.</title>
        <authorList>
            <person name="Cole D.K."/>
            <person name="Bulek A.M."/>
            <person name="Dolton G."/>
            <person name="Schauenberg A.J."/>
            <person name="Szomolay B."/>
            <person name="Rittase W."/>
            <person name="Trimby A."/>
            <person name="Jothikumar P."/>
            <person name="Fuller A."/>
            <person name="Skowera A."/>
            <person name="Rossjohn J."/>
            <person name="Zhu C."/>
            <person name="Miles J.J."/>
            <person name="Peakman M."/>
            <person name="Wooldridge L."/>
            <person name="Rizkallah P.J."/>
            <person name="Sewell A.K."/>
        </authorList>
    </citation>
    <scope>X-RAY CRYSTALLOGRAPHY (1.97 ANGSTROMS) OF 24-113</scope>
    <scope>DISULFIDE BONDS</scope>
</reference>
<gene>
    <name evidence="9" type="primary">TRAV12-3</name>
</gene>
<protein>
    <recommendedName>
        <fullName evidence="9">T cell receptor alpha variable 12-3</fullName>
    </recommendedName>
</protein>
<accession>A0A0B4J271</accession>
<organism>
    <name type="scientific">Homo sapiens</name>
    <name type="common">Human</name>
    <dbReference type="NCBI Taxonomy" id="9606"/>
    <lineage>
        <taxon>Eukaryota</taxon>
        <taxon>Metazoa</taxon>
        <taxon>Chordata</taxon>
        <taxon>Craniata</taxon>
        <taxon>Vertebrata</taxon>
        <taxon>Euteleostomi</taxon>
        <taxon>Mammalia</taxon>
        <taxon>Eutheria</taxon>
        <taxon>Euarchontoglires</taxon>
        <taxon>Primates</taxon>
        <taxon>Haplorrhini</taxon>
        <taxon>Catarrhini</taxon>
        <taxon>Hominidae</taxon>
        <taxon>Homo</taxon>
    </lineage>
</organism>
<proteinExistence type="evidence at protein level"/>
<dbReference type="EMBL" id="AC245505">
    <property type="status" value="NOT_ANNOTATED_CDS"/>
    <property type="molecule type" value="Genomic_DNA"/>
</dbReference>
<dbReference type="PDB" id="4WWK">
    <property type="method" value="X-ray"/>
    <property type="resolution" value="3.10 A"/>
    <property type="chains" value="A=22-114"/>
</dbReference>
<dbReference type="PDB" id="5C07">
    <property type="method" value="X-ray"/>
    <property type="resolution" value="2.11 A"/>
    <property type="chains" value="D/I=24-113"/>
</dbReference>
<dbReference type="PDB" id="5C08">
    <property type="method" value="X-ray"/>
    <property type="resolution" value="2.33 A"/>
    <property type="chains" value="D/I=25-113"/>
</dbReference>
<dbReference type="PDB" id="5C09">
    <property type="method" value="X-ray"/>
    <property type="resolution" value="2.48 A"/>
    <property type="chains" value="D/I=25-113"/>
</dbReference>
<dbReference type="PDB" id="5C0A">
    <property type="method" value="X-ray"/>
    <property type="resolution" value="2.46 A"/>
    <property type="chains" value="D/I=25-113"/>
</dbReference>
<dbReference type="PDB" id="5C0B">
    <property type="method" value="X-ray"/>
    <property type="resolution" value="2.03 A"/>
    <property type="chains" value="D/I=25-113"/>
</dbReference>
<dbReference type="PDB" id="5C0C">
    <property type="method" value="X-ray"/>
    <property type="resolution" value="1.97 A"/>
    <property type="chains" value="D/I=24-113"/>
</dbReference>
<dbReference type="PDB" id="5HYJ">
    <property type="method" value="X-ray"/>
    <property type="resolution" value="3.06 A"/>
    <property type="chains" value="D/I=24-113"/>
</dbReference>
<dbReference type="PDB" id="6JXR">
    <property type="method" value="EM"/>
    <property type="resolution" value="3.70 A"/>
    <property type="chains" value="m=22-114"/>
</dbReference>
<dbReference type="PDB" id="7FJD">
    <property type="method" value="EM"/>
    <property type="resolution" value="3.20 A"/>
    <property type="chains" value="m=2-114"/>
</dbReference>
<dbReference type="PDB" id="7FJE">
    <property type="method" value="EM"/>
    <property type="resolution" value="3.00 A"/>
    <property type="chains" value="m=2-114"/>
</dbReference>
<dbReference type="PDB" id="7FJF">
    <property type="method" value="EM"/>
    <property type="resolution" value="3.10 A"/>
    <property type="chains" value="m=2-114"/>
</dbReference>
<dbReference type="PDBsum" id="4WWK"/>
<dbReference type="PDBsum" id="5C07"/>
<dbReference type="PDBsum" id="5C08"/>
<dbReference type="PDBsum" id="5C09"/>
<dbReference type="PDBsum" id="5C0A"/>
<dbReference type="PDBsum" id="5C0B"/>
<dbReference type="PDBsum" id="5C0C"/>
<dbReference type="PDBsum" id="5HYJ"/>
<dbReference type="PDBsum" id="6JXR"/>
<dbReference type="PDBsum" id="7FJD"/>
<dbReference type="PDBsum" id="7FJE"/>
<dbReference type="PDBsum" id="7FJF"/>
<dbReference type="SMR" id="A0A0B4J271"/>
<dbReference type="FunCoup" id="A0A0B4J271">
    <property type="interactions" value="339"/>
</dbReference>
<dbReference type="IMGT_GENE-DB" id="TRAV12-3"/>
<dbReference type="GlyCosmos" id="A0A0B4J271">
    <property type="glycosylation" value="1 site, No reported glycans"/>
</dbReference>
<dbReference type="GlyGen" id="A0A0B4J271">
    <property type="glycosylation" value="1 site"/>
</dbReference>
<dbReference type="BioMuta" id="TRAV12-3"/>
<dbReference type="Ensembl" id="ENST00000390442.3">
    <property type="protein sequence ID" value="ENSP00000451822.1"/>
    <property type="gene ID" value="ENSG00000211794.3"/>
</dbReference>
<dbReference type="AGR" id="HGNC:12107"/>
<dbReference type="GeneCards" id="TRAV12-3"/>
<dbReference type="HGNC" id="HGNC:12107">
    <property type="gene designation" value="TRAV12-3"/>
</dbReference>
<dbReference type="HPA" id="ENSG00000211794">
    <property type="expression patterns" value="Tissue enriched (lymphoid)"/>
</dbReference>
<dbReference type="neXtProt" id="NX_A0A0B4J271"/>
<dbReference type="OpenTargets" id="ENSG00000211794"/>
<dbReference type="VEuPathDB" id="HostDB:ENSG00000211794"/>
<dbReference type="GeneTree" id="ENSGT00940000153130"/>
<dbReference type="HOGENOM" id="CLU_077975_8_3_1"/>
<dbReference type="InParanoid" id="A0A0B4J271"/>
<dbReference type="OMA" id="YSNRAFQ"/>
<dbReference type="OrthoDB" id="9624245at2759"/>
<dbReference type="PAN-GO" id="A0A0B4J271">
    <property type="GO annotations" value="1 GO annotation based on evolutionary models"/>
</dbReference>
<dbReference type="PhylomeDB" id="A0A0B4J271"/>
<dbReference type="ChiTaRS" id="TRAV12-3">
    <property type="organism name" value="human"/>
</dbReference>
<dbReference type="Pharos" id="A0A0B4J271">
    <property type="development level" value="Tdark"/>
</dbReference>
<dbReference type="PRO" id="PR:A0A0B4J271"/>
<dbReference type="Proteomes" id="UP000005640">
    <property type="component" value="Chromosome 14"/>
</dbReference>
<dbReference type="RNAct" id="A0A0B4J271">
    <property type="molecule type" value="protein"/>
</dbReference>
<dbReference type="Bgee" id="ENSG00000211794">
    <property type="expression patterns" value="Expressed in granulocyte and 100 other cell types or tissues"/>
</dbReference>
<dbReference type="GO" id="GO:0042101">
    <property type="term" value="C:T cell receptor complex"/>
    <property type="evidence" value="ECO:0007669"/>
    <property type="project" value="UniProtKB-KW"/>
</dbReference>
<dbReference type="GO" id="GO:0042605">
    <property type="term" value="F:peptide antigen binding"/>
    <property type="evidence" value="ECO:0000318"/>
    <property type="project" value="GO_Central"/>
</dbReference>
<dbReference type="GO" id="GO:0002250">
    <property type="term" value="P:adaptive immune response"/>
    <property type="evidence" value="ECO:0007669"/>
    <property type="project" value="UniProtKB-KW"/>
</dbReference>
<dbReference type="CDD" id="cd04983">
    <property type="entry name" value="IgV_TCR_alpha"/>
    <property type="match status" value="1"/>
</dbReference>
<dbReference type="Gene3D" id="2.60.40.10">
    <property type="entry name" value="Immunoglobulins"/>
    <property type="match status" value="1"/>
</dbReference>
<dbReference type="InterPro" id="IPR007110">
    <property type="entry name" value="Ig-like_dom"/>
</dbReference>
<dbReference type="InterPro" id="IPR036179">
    <property type="entry name" value="Ig-like_dom_sf"/>
</dbReference>
<dbReference type="InterPro" id="IPR013783">
    <property type="entry name" value="Ig-like_fold"/>
</dbReference>
<dbReference type="InterPro" id="IPR013106">
    <property type="entry name" value="Ig_V-set"/>
</dbReference>
<dbReference type="InterPro" id="IPR051006">
    <property type="entry name" value="TCR_variable_domain"/>
</dbReference>
<dbReference type="PANTHER" id="PTHR19343">
    <property type="entry name" value="T CELL RECEPTOR ALPHA VARIABLE 1-2"/>
    <property type="match status" value="1"/>
</dbReference>
<dbReference type="PANTHER" id="PTHR19343:SF12">
    <property type="entry name" value="T CELL RECEPTOR ALPHA VARIABLE 12-3"/>
    <property type="match status" value="1"/>
</dbReference>
<dbReference type="Pfam" id="PF07686">
    <property type="entry name" value="V-set"/>
    <property type="match status" value="1"/>
</dbReference>
<dbReference type="SMART" id="SM00406">
    <property type="entry name" value="IGv"/>
    <property type="match status" value="1"/>
</dbReference>
<dbReference type="SUPFAM" id="SSF48726">
    <property type="entry name" value="Immunoglobulin"/>
    <property type="match status" value="1"/>
</dbReference>
<dbReference type="PROSITE" id="PS50835">
    <property type="entry name" value="IG_LIKE"/>
    <property type="match status" value="1"/>
</dbReference>
<keyword id="KW-0002">3D-structure</keyword>
<keyword id="KW-1064">Adaptive immunity</keyword>
<keyword id="KW-1003">Cell membrane</keyword>
<keyword id="KW-1015">Disulfide bond</keyword>
<keyword id="KW-0325">Glycoprotein</keyword>
<keyword id="KW-0391">Immunity</keyword>
<keyword id="KW-0393">Immunoglobulin domain</keyword>
<keyword id="KW-0472">Membrane</keyword>
<keyword id="KW-1267">Proteomics identification</keyword>
<keyword id="KW-0675">Receptor</keyword>
<keyword id="KW-1185">Reference proteome</keyword>
<keyword id="KW-0732">Signal</keyword>
<keyword id="KW-1279">T cell receptor</keyword>
<comment type="function">
    <text evidence="4 6 7 8">V region of the variable domain of T cell receptor (TR) alpha chain that participates in the antigen recognition (PubMed:24600447). Alpha-beta T cell receptors are antigen specific receptors which are essential to the immune response and are present on the cell surface of T lymphocytes. Recognize peptide-major histocompatibility (MH) (pMH) complexes that are displayed by antigen presenting cells (APC), a prerequisite for efficient T cell adaptive immunity against pathogens (PubMed:25493333). Binding of alpha-beta TR to pMH complex initiates TR-CD3 clustering on the cell surface and intracellular activation of LCK that phosphorylates the ITAM motifs of CD3G, CD3D, CD3E and CD247 enabling the recruitment of ZAP70. In turn ZAP70 phosphorylates LAT, which recruits numerous signaling molecules to form the LAT signalosome. The LAT signalosome propagates signal branching to three major signaling pathways, the calcium, the mitogen-activated protein kinase (MAPK) kinase and the nuclear factor NF-kappa-B (NF-kB) pathways, leading to the mobilization of transcription factors that are critical for gene expression and essential for T cell growth and differentiation (PubMed:23524462). The T cell repertoire is generated in the thymus, by V-(D)-J rearrangement. This repertoire is then shaped by intrathymic selection events to generate a peripheral T cell pool of self-MH restricted, non-autoaggressive T cells. Post-thymic interaction of alpha-beta TR with the pMH complexes shapes TR structural and functional avidity (PubMed:15040585).</text>
</comment>
<comment type="subunit">
    <text evidence="5">Alpha-beta TR is a heterodimer composed of an alpha and beta chain; disulfide-linked. The alpha-beta TR is associated with the transmembrane signaling CD3 coreceptor proteins to form the TR-CD3 (TcR or TCR). The assembly of alpha-beta TR heterodimers with CD3 occurs in the endoplasmic reticulum where a single alpha-beta TR heterodimer associates with one CD3D-CD3E heterodimer, one CD3G-CD3E heterodimer and one CD247 homodimer forming a stable octameric structure. CD3D-CD3E and CD3G-CD3E heterodimers preferentially associate with TR alpha and TR beta chains, respectively. The association of the CD247 homodimer is the last step of TcR assembly in the endoplasmic reticulum and is required for transport to the cell surface.</text>
</comment>
<comment type="subcellular location">
    <subcellularLocation>
        <location evidence="5">Cell membrane</location>
    </subcellularLocation>
</comment>
<comment type="polymorphism">
    <text evidence="10">There are several alleles. The sequence shown is that of IMGT allele TRAV12-3*01.</text>
</comment>
<sequence length="114" mass="13173">MMKSLRVLLVILWLQLSWVWSQQKEVEQDPGPLSVPEGAIVSLNCTYSNSAFQYFMWYRQYSRKGPELLMYTYSSGNKEDGRFTAQVDKSSKYISLFIRDSQPSDSATYLCAMS</sequence>
<name>TVAL3_HUMAN</name>